<protein>
    <recommendedName>
        <fullName evidence="1">Urease subunit gamma</fullName>
        <ecNumber evidence="1">3.5.1.5</ecNumber>
    </recommendedName>
    <alternativeName>
        <fullName evidence="1">Urea amidohydrolase subunit gamma</fullName>
    </alternativeName>
</protein>
<sequence>MHLQPREQEKLMIVVAADLARRRQARGLQLNYPEAVAIISYELMEGARDGRSVAELMSWGTTILNRDDVQEGIAEMIPEVQVEATFPDGTKLITVHTPIR</sequence>
<feature type="chain" id="PRO_0000098009" description="Urease subunit gamma">
    <location>
        <begin position="1"/>
        <end position="100"/>
    </location>
</feature>
<organism>
    <name type="scientific">Corynebacterium efficiens (strain DSM 44549 / YS-314 / AJ 12310 / JCM 11189 / NBRC 100395)</name>
    <dbReference type="NCBI Taxonomy" id="196164"/>
    <lineage>
        <taxon>Bacteria</taxon>
        <taxon>Bacillati</taxon>
        <taxon>Actinomycetota</taxon>
        <taxon>Actinomycetes</taxon>
        <taxon>Mycobacteriales</taxon>
        <taxon>Corynebacteriaceae</taxon>
        <taxon>Corynebacterium</taxon>
    </lineage>
</organism>
<evidence type="ECO:0000255" key="1">
    <source>
        <dbReference type="HAMAP-Rule" id="MF_00739"/>
    </source>
</evidence>
<evidence type="ECO:0000305" key="2"/>
<comment type="catalytic activity">
    <reaction evidence="1">
        <text>urea + 2 H2O + H(+) = hydrogencarbonate + 2 NH4(+)</text>
        <dbReference type="Rhea" id="RHEA:20557"/>
        <dbReference type="ChEBI" id="CHEBI:15377"/>
        <dbReference type="ChEBI" id="CHEBI:15378"/>
        <dbReference type="ChEBI" id="CHEBI:16199"/>
        <dbReference type="ChEBI" id="CHEBI:17544"/>
        <dbReference type="ChEBI" id="CHEBI:28938"/>
        <dbReference type="EC" id="3.5.1.5"/>
    </reaction>
</comment>
<comment type="pathway">
    <text evidence="1">Nitrogen metabolism; urea degradation; CO(2) and NH(3) from urea (urease route): step 1/1.</text>
</comment>
<comment type="subunit">
    <text evidence="1">Heterotrimer of UreA (gamma), UreB (beta) and UreC (alpha) subunits. Three heterotrimers associate to form the active enzyme.</text>
</comment>
<comment type="subcellular location">
    <subcellularLocation>
        <location evidence="1">Cytoplasm</location>
    </subcellularLocation>
</comment>
<comment type="similarity">
    <text evidence="1">Belongs to the urease gamma subunit family.</text>
</comment>
<comment type="sequence caution" evidence="2">
    <conflict type="erroneous initiation">
        <sequence resource="EMBL-CDS" id="BAC17803"/>
    </conflict>
</comment>
<gene>
    <name evidence="1" type="primary">ureA</name>
    <name type="ordered locus">CE0993</name>
</gene>
<name>URE3_COREF</name>
<reference key="1">
    <citation type="journal article" date="2003" name="Genome Res.">
        <title>Comparative complete genome sequence analysis of the amino acid replacements responsible for the thermostability of Corynebacterium efficiens.</title>
        <authorList>
            <person name="Nishio Y."/>
            <person name="Nakamura Y."/>
            <person name="Kawarabayasi Y."/>
            <person name="Usuda Y."/>
            <person name="Kimura E."/>
            <person name="Sugimoto S."/>
            <person name="Matsui K."/>
            <person name="Yamagishi A."/>
            <person name="Kikuchi H."/>
            <person name="Ikeo K."/>
            <person name="Gojobori T."/>
        </authorList>
    </citation>
    <scope>NUCLEOTIDE SEQUENCE [LARGE SCALE GENOMIC DNA]</scope>
    <source>
        <strain>DSM 44549 / YS-314 / AJ 12310 / JCM 11189 / NBRC 100395</strain>
    </source>
</reference>
<accession>Q8FQX4</accession>
<keyword id="KW-0963">Cytoplasm</keyword>
<keyword id="KW-0378">Hydrolase</keyword>
<keyword id="KW-1185">Reference proteome</keyword>
<proteinExistence type="inferred from homology"/>
<dbReference type="EC" id="3.5.1.5" evidence="1"/>
<dbReference type="EMBL" id="BA000035">
    <property type="protein sequence ID" value="BAC17803.1"/>
    <property type="status" value="ALT_INIT"/>
    <property type="molecule type" value="Genomic_DNA"/>
</dbReference>
<dbReference type="RefSeq" id="WP_006770042.1">
    <property type="nucleotide sequence ID" value="NC_004369.1"/>
</dbReference>
<dbReference type="SMR" id="Q8FQX4"/>
<dbReference type="STRING" id="196164.gene:10741399"/>
<dbReference type="KEGG" id="cef:CE0993"/>
<dbReference type="eggNOG" id="COG0831">
    <property type="taxonomic scope" value="Bacteria"/>
</dbReference>
<dbReference type="HOGENOM" id="CLU_145825_1_0_11"/>
<dbReference type="OrthoDB" id="9797217at2"/>
<dbReference type="UniPathway" id="UPA00258">
    <property type="reaction ID" value="UER00370"/>
</dbReference>
<dbReference type="Proteomes" id="UP000001409">
    <property type="component" value="Chromosome"/>
</dbReference>
<dbReference type="GO" id="GO:0005737">
    <property type="term" value="C:cytoplasm"/>
    <property type="evidence" value="ECO:0007669"/>
    <property type="project" value="UniProtKB-SubCell"/>
</dbReference>
<dbReference type="GO" id="GO:0016151">
    <property type="term" value="F:nickel cation binding"/>
    <property type="evidence" value="ECO:0007669"/>
    <property type="project" value="InterPro"/>
</dbReference>
<dbReference type="GO" id="GO:0009039">
    <property type="term" value="F:urease activity"/>
    <property type="evidence" value="ECO:0007669"/>
    <property type="project" value="UniProtKB-UniRule"/>
</dbReference>
<dbReference type="GO" id="GO:0043419">
    <property type="term" value="P:urea catabolic process"/>
    <property type="evidence" value="ECO:0007669"/>
    <property type="project" value="UniProtKB-UniRule"/>
</dbReference>
<dbReference type="CDD" id="cd00390">
    <property type="entry name" value="Urease_gamma"/>
    <property type="match status" value="1"/>
</dbReference>
<dbReference type="Gene3D" id="3.30.280.10">
    <property type="entry name" value="Urease, gamma-like subunit"/>
    <property type="match status" value="1"/>
</dbReference>
<dbReference type="HAMAP" id="MF_00739">
    <property type="entry name" value="Urease_gamma"/>
    <property type="match status" value="1"/>
</dbReference>
<dbReference type="InterPro" id="IPR012010">
    <property type="entry name" value="Urease_gamma"/>
</dbReference>
<dbReference type="InterPro" id="IPR002026">
    <property type="entry name" value="Urease_gamma/gamma-beta_su"/>
</dbReference>
<dbReference type="InterPro" id="IPR036463">
    <property type="entry name" value="Urease_gamma_sf"/>
</dbReference>
<dbReference type="InterPro" id="IPR050069">
    <property type="entry name" value="Urease_subunit"/>
</dbReference>
<dbReference type="NCBIfam" id="NF009712">
    <property type="entry name" value="PRK13241.1"/>
    <property type="match status" value="1"/>
</dbReference>
<dbReference type="NCBIfam" id="TIGR00193">
    <property type="entry name" value="urease_gam"/>
    <property type="match status" value="1"/>
</dbReference>
<dbReference type="PANTHER" id="PTHR33569">
    <property type="entry name" value="UREASE"/>
    <property type="match status" value="1"/>
</dbReference>
<dbReference type="PANTHER" id="PTHR33569:SF1">
    <property type="entry name" value="UREASE"/>
    <property type="match status" value="1"/>
</dbReference>
<dbReference type="Pfam" id="PF00547">
    <property type="entry name" value="Urease_gamma"/>
    <property type="match status" value="1"/>
</dbReference>
<dbReference type="PIRSF" id="PIRSF001223">
    <property type="entry name" value="Urease_gamma"/>
    <property type="match status" value="1"/>
</dbReference>
<dbReference type="SUPFAM" id="SSF54111">
    <property type="entry name" value="Urease, gamma-subunit"/>
    <property type="match status" value="1"/>
</dbReference>